<protein>
    <recommendedName>
        <fullName evidence="1">4-hydroxy-3-methylbut-2-en-1-yl diphosphate synthase (flavodoxin)</fullName>
        <ecNumber evidence="1">1.17.7.3</ecNumber>
    </recommendedName>
    <alternativeName>
        <fullName evidence="1">1-hydroxy-2-methyl-2-(E)-butenyl 4-diphosphate synthase</fullName>
    </alternativeName>
</protein>
<organism>
    <name type="scientific">Enterobacter sp. (strain 638)</name>
    <dbReference type="NCBI Taxonomy" id="399742"/>
    <lineage>
        <taxon>Bacteria</taxon>
        <taxon>Pseudomonadati</taxon>
        <taxon>Pseudomonadota</taxon>
        <taxon>Gammaproteobacteria</taxon>
        <taxon>Enterobacterales</taxon>
        <taxon>Enterobacteriaceae</taxon>
        <taxon>Enterobacter</taxon>
    </lineage>
</organism>
<proteinExistence type="inferred from homology"/>
<evidence type="ECO:0000255" key="1">
    <source>
        <dbReference type="HAMAP-Rule" id="MF_00159"/>
    </source>
</evidence>
<name>ISPG_ENT38</name>
<keyword id="KW-0004">4Fe-4S</keyword>
<keyword id="KW-0408">Iron</keyword>
<keyword id="KW-0411">Iron-sulfur</keyword>
<keyword id="KW-0414">Isoprene biosynthesis</keyword>
<keyword id="KW-0479">Metal-binding</keyword>
<keyword id="KW-0560">Oxidoreductase</keyword>
<dbReference type="EC" id="1.17.7.3" evidence="1"/>
<dbReference type="EMBL" id="CP000653">
    <property type="protein sequence ID" value="ABP61673.1"/>
    <property type="molecule type" value="Genomic_DNA"/>
</dbReference>
<dbReference type="RefSeq" id="WP_015960005.1">
    <property type="nucleotide sequence ID" value="NC_009436.1"/>
</dbReference>
<dbReference type="SMR" id="A4WD93"/>
<dbReference type="STRING" id="399742.Ent638_3009"/>
<dbReference type="GeneID" id="93305950"/>
<dbReference type="KEGG" id="ent:Ent638_3009"/>
<dbReference type="eggNOG" id="COG0821">
    <property type="taxonomic scope" value="Bacteria"/>
</dbReference>
<dbReference type="HOGENOM" id="CLU_042258_0_0_6"/>
<dbReference type="OrthoDB" id="9803214at2"/>
<dbReference type="UniPathway" id="UPA00056">
    <property type="reaction ID" value="UER00096"/>
</dbReference>
<dbReference type="Proteomes" id="UP000000230">
    <property type="component" value="Chromosome"/>
</dbReference>
<dbReference type="GO" id="GO:0051539">
    <property type="term" value="F:4 iron, 4 sulfur cluster binding"/>
    <property type="evidence" value="ECO:0007669"/>
    <property type="project" value="UniProtKB-UniRule"/>
</dbReference>
<dbReference type="GO" id="GO:0046429">
    <property type="term" value="F:4-hydroxy-3-methylbut-2-en-1-yl diphosphate synthase activity (ferredoxin)"/>
    <property type="evidence" value="ECO:0007669"/>
    <property type="project" value="UniProtKB-UniRule"/>
</dbReference>
<dbReference type="GO" id="GO:0141197">
    <property type="term" value="F:4-hydroxy-3-methylbut-2-enyl-diphosphate synthase activity (flavodoxin)"/>
    <property type="evidence" value="ECO:0007669"/>
    <property type="project" value="UniProtKB-EC"/>
</dbReference>
<dbReference type="GO" id="GO:0005506">
    <property type="term" value="F:iron ion binding"/>
    <property type="evidence" value="ECO:0007669"/>
    <property type="project" value="InterPro"/>
</dbReference>
<dbReference type="GO" id="GO:0019288">
    <property type="term" value="P:isopentenyl diphosphate biosynthetic process, methylerythritol 4-phosphate pathway"/>
    <property type="evidence" value="ECO:0007669"/>
    <property type="project" value="UniProtKB-UniRule"/>
</dbReference>
<dbReference type="GO" id="GO:0016114">
    <property type="term" value="P:terpenoid biosynthetic process"/>
    <property type="evidence" value="ECO:0007669"/>
    <property type="project" value="InterPro"/>
</dbReference>
<dbReference type="FunFam" id="3.20.20.20:FF:000001">
    <property type="entry name" value="4-hydroxy-3-methylbut-2-en-1-yl diphosphate synthase (flavodoxin)"/>
    <property type="match status" value="1"/>
</dbReference>
<dbReference type="FunFam" id="3.30.413.10:FF:000002">
    <property type="entry name" value="4-hydroxy-3-methylbut-2-en-1-yl diphosphate synthase (flavodoxin)"/>
    <property type="match status" value="1"/>
</dbReference>
<dbReference type="Gene3D" id="3.20.20.20">
    <property type="entry name" value="Dihydropteroate synthase-like"/>
    <property type="match status" value="1"/>
</dbReference>
<dbReference type="Gene3D" id="3.30.413.10">
    <property type="entry name" value="Sulfite Reductase Hemoprotein, domain 1"/>
    <property type="match status" value="1"/>
</dbReference>
<dbReference type="HAMAP" id="MF_00159">
    <property type="entry name" value="IspG"/>
    <property type="match status" value="1"/>
</dbReference>
<dbReference type="InterPro" id="IPR011005">
    <property type="entry name" value="Dihydropteroate_synth-like_sf"/>
</dbReference>
<dbReference type="InterPro" id="IPR016425">
    <property type="entry name" value="IspG_bac"/>
</dbReference>
<dbReference type="InterPro" id="IPR004588">
    <property type="entry name" value="IspG_bac-typ"/>
</dbReference>
<dbReference type="InterPro" id="IPR045854">
    <property type="entry name" value="NO2/SO3_Rdtase_4Fe4S_sf"/>
</dbReference>
<dbReference type="NCBIfam" id="TIGR00612">
    <property type="entry name" value="ispG_gcpE"/>
    <property type="match status" value="1"/>
</dbReference>
<dbReference type="NCBIfam" id="NF001540">
    <property type="entry name" value="PRK00366.1"/>
    <property type="match status" value="1"/>
</dbReference>
<dbReference type="PANTHER" id="PTHR30454">
    <property type="entry name" value="4-HYDROXY-3-METHYLBUT-2-EN-1-YL DIPHOSPHATE SYNTHASE"/>
    <property type="match status" value="1"/>
</dbReference>
<dbReference type="PANTHER" id="PTHR30454:SF0">
    <property type="entry name" value="4-HYDROXY-3-METHYLBUT-2-EN-1-YL DIPHOSPHATE SYNTHASE (FERREDOXIN), CHLOROPLASTIC"/>
    <property type="match status" value="1"/>
</dbReference>
<dbReference type="Pfam" id="PF04551">
    <property type="entry name" value="GcpE"/>
    <property type="match status" value="1"/>
</dbReference>
<dbReference type="PIRSF" id="PIRSF004640">
    <property type="entry name" value="IspG"/>
    <property type="match status" value="1"/>
</dbReference>
<dbReference type="SUPFAM" id="SSF51717">
    <property type="entry name" value="Dihydropteroate synthetase-like"/>
    <property type="match status" value="1"/>
</dbReference>
<dbReference type="SUPFAM" id="SSF56014">
    <property type="entry name" value="Nitrite and sulphite reductase 4Fe-4S domain-like"/>
    <property type="match status" value="1"/>
</dbReference>
<gene>
    <name evidence="1" type="primary">ispG</name>
    <name type="ordered locus">Ent638_3009</name>
</gene>
<accession>A4WD93</accession>
<feature type="chain" id="PRO_1000058196" description="4-hydroxy-3-methylbut-2-en-1-yl diphosphate synthase (flavodoxin)">
    <location>
        <begin position="1"/>
        <end position="372"/>
    </location>
</feature>
<feature type="binding site" evidence="1">
    <location>
        <position position="270"/>
    </location>
    <ligand>
        <name>[4Fe-4S] cluster</name>
        <dbReference type="ChEBI" id="CHEBI:49883"/>
    </ligand>
</feature>
<feature type="binding site" evidence="1">
    <location>
        <position position="273"/>
    </location>
    <ligand>
        <name>[4Fe-4S] cluster</name>
        <dbReference type="ChEBI" id="CHEBI:49883"/>
    </ligand>
</feature>
<feature type="binding site" evidence="1">
    <location>
        <position position="305"/>
    </location>
    <ligand>
        <name>[4Fe-4S] cluster</name>
        <dbReference type="ChEBI" id="CHEBI:49883"/>
    </ligand>
</feature>
<feature type="binding site" evidence="1">
    <location>
        <position position="312"/>
    </location>
    <ligand>
        <name>[4Fe-4S] cluster</name>
        <dbReference type="ChEBI" id="CHEBI:49883"/>
    </ligand>
</feature>
<sequence length="372" mass="40607">MHNQAPIQRRKSKRIYVGNVPIGDGAPIAVQSMTNTRTTDVAATVNQIKALERVGADIVRVSVPTMDAAEAFKLIKQQVNVPLVADIHFDYRIALKVAEYGVDCLRINPGNIGSEERIRAVVDCARDKNIPIRIGVNAGSLEKDLQEKYGEPTPQALLESAMRHVDHLDRLNFDQFKVSVKASDVFLAVESYRLLAKQIEQPLHLGITEAGGLRSGSVKSAIGLGLLLSEGIGDTLRVSLAADPVEEIKVGFDILKSLRIRARGINFIACPTCSRQEFDVIGTVNALEQRLEDLITPMDVSIIGCVVNGPGEALVSTLGVTGGNKKSGLYEDGIRKDRLDNNDMIDQLEARIRAKATILDEAQRISIQQIEK</sequence>
<reference key="1">
    <citation type="journal article" date="2010" name="PLoS Genet.">
        <title>Genome sequence of the plant growth promoting endophytic bacterium Enterobacter sp. 638.</title>
        <authorList>
            <person name="Taghavi S."/>
            <person name="van der Lelie D."/>
            <person name="Hoffman A."/>
            <person name="Zhang Y.B."/>
            <person name="Walla M.D."/>
            <person name="Vangronsveld J."/>
            <person name="Newman L."/>
            <person name="Monchy S."/>
        </authorList>
    </citation>
    <scope>NUCLEOTIDE SEQUENCE [LARGE SCALE GENOMIC DNA]</scope>
    <source>
        <strain>638</strain>
    </source>
</reference>
<comment type="function">
    <text evidence="1">Converts 2C-methyl-D-erythritol 2,4-cyclodiphosphate (ME-2,4cPP) into 1-hydroxy-2-methyl-2-(E)-butenyl 4-diphosphate.</text>
</comment>
<comment type="catalytic activity">
    <reaction evidence="1">
        <text>(2E)-4-hydroxy-3-methylbut-2-enyl diphosphate + oxidized [flavodoxin] + H2O + 2 H(+) = 2-C-methyl-D-erythritol 2,4-cyclic diphosphate + reduced [flavodoxin]</text>
        <dbReference type="Rhea" id="RHEA:43604"/>
        <dbReference type="Rhea" id="RHEA-COMP:10622"/>
        <dbReference type="Rhea" id="RHEA-COMP:10623"/>
        <dbReference type="ChEBI" id="CHEBI:15377"/>
        <dbReference type="ChEBI" id="CHEBI:15378"/>
        <dbReference type="ChEBI" id="CHEBI:57618"/>
        <dbReference type="ChEBI" id="CHEBI:58210"/>
        <dbReference type="ChEBI" id="CHEBI:58483"/>
        <dbReference type="ChEBI" id="CHEBI:128753"/>
        <dbReference type="EC" id="1.17.7.3"/>
    </reaction>
</comment>
<comment type="cofactor">
    <cofactor evidence="1">
        <name>[4Fe-4S] cluster</name>
        <dbReference type="ChEBI" id="CHEBI:49883"/>
    </cofactor>
    <text evidence="1">Binds 1 [4Fe-4S] cluster.</text>
</comment>
<comment type="pathway">
    <text evidence="1">Isoprenoid biosynthesis; isopentenyl diphosphate biosynthesis via DXP pathway; isopentenyl diphosphate from 1-deoxy-D-xylulose 5-phosphate: step 5/6.</text>
</comment>
<comment type="similarity">
    <text evidence="1">Belongs to the IspG family.</text>
</comment>